<reference key="1">
    <citation type="journal article" date="2008" name="Chem. Biol. Interact.">
        <title>Extending the Bacillus cereus group genomics to putative food-borne pathogens of different toxicity.</title>
        <authorList>
            <person name="Lapidus A."/>
            <person name="Goltsman E."/>
            <person name="Auger S."/>
            <person name="Galleron N."/>
            <person name="Segurens B."/>
            <person name="Dossat C."/>
            <person name="Land M.L."/>
            <person name="Broussolle V."/>
            <person name="Brillard J."/>
            <person name="Guinebretiere M.-H."/>
            <person name="Sanchis V."/>
            <person name="Nguen-the C."/>
            <person name="Lereclus D."/>
            <person name="Richardson P."/>
            <person name="Wincker P."/>
            <person name="Weissenbach J."/>
            <person name="Ehrlich S.D."/>
            <person name="Sorokin A."/>
        </authorList>
    </citation>
    <scope>NUCLEOTIDE SEQUENCE [LARGE SCALE GENOMIC DNA]</scope>
    <source>
        <strain>DSM 22905 / CIP 110041 / 391-98 / NVH 391-98</strain>
    </source>
</reference>
<gene>
    <name evidence="1" type="primary">mtnD</name>
    <name type="ordered locus">Bcer98_2738</name>
</gene>
<organism>
    <name type="scientific">Bacillus cytotoxicus (strain DSM 22905 / CIP 110041 / 391-98 / NVH 391-98)</name>
    <dbReference type="NCBI Taxonomy" id="315749"/>
    <lineage>
        <taxon>Bacteria</taxon>
        <taxon>Bacillati</taxon>
        <taxon>Bacillota</taxon>
        <taxon>Bacilli</taxon>
        <taxon>Bacillales</taxon>
        <taxon>Bacillaceae</taxon>
        <taxon>Bacillus</taxon>
        <taxon>Bacillus cereus group</taxon>
    </lineage>
</organism>
<evidence type="ECO:0000255" key="1">
    <source>
        <dbReference type="HAMAP-Rule" id="MF_01682"/>
    </source>
</evidence>
<comment type="function">
    <text evidence="1">Catalyzes 2 different reactions between oxygen and the acireductone 1,2-dihydroxy-3-keto-5-methylthiopentene (DHK-MTPene) depending upon the metal bound in the active site. Fe-containing acireductone dioxygenase (Fe-ARD) produces formate and 2-keto-4-methylthiobutyrate (KMTB), the alpha-ketoacid precursor of methionine in the methionine recycle pathway. Ni-containing acireductone dioxygenase (Ni-ARD) produces methylthiopropionate, carbon monoxide and formate, and does not lie on the methionine recycle pathway.</text>
</comment>
<comment type="catalytic activity">
    <reaction evidence="1">
        <text>1,2-dihydroxy-5-(methylsulfanyl)pent-1-en-3-one + O2 = 3-(methylsulfanyl)propanoate + CO + formate + 2 H(+)</text>
        <dbReference type="Rhea" id="RHEA:14161"/>
        <dbReference type="ChEBI" id="CHEBI:15378"/>
        <dbReference type="ChEBI" id="CHEBI:15379"/>
        <dbReference type="ChEBI" id="CHEBI:15740"/>
        <dbReference type="ChEBI" id="CHEBI:17245"/>
        <dbReference type="ChEBI" id="CHEBI:49016"/>
        <dbReference type="ChEBI" id="CHEBI:49252"/>
        <dbReference type="EC" id="1.13.11.53"/>
    </reaction>
</comment>
<comment type="catalytic activity">
    <reaction evidence="1">
        <text>1,2-dihydroxy-5-(methylsulfanyl)pent-1-en-3-one + O2 = 4-methylsulfanyl-2-oxobutanoate + formate + 2 H(+)</text>
        <dbReference type="Rhea" id="RHEA:24504"/>
        <dbReference type="ChEBI" id="CHEBI:15378"/>
        <dbReference type="ChEBI" id="CHEBI:15379"/>
        <dbReference type="ChEBI" id="CHEBI:15740"/>
        <dbReference type="ChEBI" id="CHEBI:16723"/>
        <dbReference type="ChEBI" id="CHEBI:49252"/>
        <dbReference type="EC" id="1.13.11.54"/>
    </reaction>
</comment>
<comment type="cofactor">
    <cofactor evidence="1">
        <name>Fe(2+)</name>
        <dbReference type="ChEBI" id="CHEBI:29033"/>
    </cofactor>
    <text evidence="1">Binds 1 Fe(2+) cation per monomer.</text>
</comment>
<comment type="cofactor">
    <cofactor evidence="1">
        <name>Ni(2+)</name>
        <dbReference type="ChEBI" id="CHEBI:49786"/>
    </cofactor>
    <text evidence="1">Binds 1 nickel ion per monomer.</text>
</comment>
<comment type="pathway">
    <text evidence="1">Amino-acid biosynthesis; L-methionine biosynthesis via salvage pathway; L-methionine from S-methyl-5-thio-alpha-D-ribose 1-phosphate: step 5/6.</text>
</comment>
<comment type="subunit">
    <text evidence="1">Monomer.</text>
</comment>
<comment type="similarity">
    <text evidence="1">Belongs to the acireductone dioxygenase (ARD) family.</text>
</comment>
<proteinExistence type="inferred from homology"/>
<dbReference type="EC" id="1.13.11.54" evidence="1"/>
<dbReference type="EC" id="1.13.11.53" evidence="1"/>
<dbReference type="EMBL" id="CP000764">
    <property type="protein sequence ID" value="ABS22971.1"/>
    <property type="molecule type" value="Genomic_DNA"/>
</dbReference>
<dbReference type="RefSeq" id="WP_012095196.1">
    <property type="nucleotide sequence ID" value="NC_009674.1"/>
</dbReference>
<dbReference type="SMR" id="A7GS63"/>
<dbReference type="STRING" id="315749.Bcer98_2738"/>
<dbReference type="GeneID" id="33897992"/>
<dbReference type="KEGG" id="bcy:Bcer98_2738"/>
<dbReference type="eggNOG" id="COG1791">
    <property type="taxonomic scope" value="Bacteria"/>
</dbReference>
<dbReference type="HOGENOM" id="CLU_125400_0_0_9"/>
<dbReference type="OrthoDB" id="9795636at2"/>
<dbReference type="UniPathway" id="UPA00904">
    <property type="reaction ID" value="UER00878"/>
</dbReference>
<dbReference type="Proteomes" id="UP000002300">
    <property type="component" value="Chromosome"/>
</dbReference>
<dbReference type="GO" id="GO:0010308">
    <property type="term" value="F:acireductone dioxygenase (Ni2+-requiring) activity"/>
    <property type="evidence" value="ECO:0007669"/>
    <property type="project" value="UniProtKB-UniRule"/>
</dbReference>
<dbReference type="GO" id="GO:0010309">
    <property type="term" value="F:acireductone dioxygenase [iron(II)-requiring] activity"/>
    <property type="evidence" value="ECO:0007669"/>
    <property type="project" value="UniProtKB-UniRule"/>
</dbReference>
<dbReference type="GO" id="GO:0005506">
    <property type="term" value="F:iron ion binding"/>
    <property type="evidence" value="ECO:0007669"/>
    <property type="project" value="UniProtKB-UniRule"/>
</dbReference>
<dbReference type="GO" id="GO:0016151">
    <property type="term" value="F:nickel cation binding"/>
    <property type="evidence" value="ECO:0007669"/>
    <property type="project" value="UniProtKB-UniRule"/>
</dbReference>
<dbReference type="GO" id="GO:0019509">
    <property type="term" value="P:L-methionine salvage from methylthioadenosine"/>
    <property type="evidence" value="ECO:0007669"/>
    <property type="project" value="UniProtKB-UniRule"/>
</dbReference>
<dbReference type="GO" id="GO:0019284">
    <property type="term" value="P:L-methionine salvage from S-adenosylmethionine"/>
    <property type="evidence" value="ECO:0007669"/>
    <property type="project" value="InterPro"/>
</dbReference>
<dbReference type="CDD" id="cd02232">
    <property type="entry name" value="cupin_ARD"/>
    <property type="match status" value="1"/>
</dbReference>
<dbReference type="FunFam" id="2.60.120.10:FF:000056">
    <property type="entry name" value="Acireductone dioxygenase"/>
    <property type="match status" value="1"/>
</dbReference>
<dbReference type="Gene3D" id="2.60.120.10">
    <property type="entry name" value="Jelly Rolls"/>
    <property type="match status" value="1"/>
</dbReference>
<dbReference type="HAMAP" id="MF_01682">
    <property type="entry name" value="Salvage_MtnD"/>
    <property type="match status" value="1"/>
</dbReference>
<dbReference type="InterPro" id="IPR004313">
    <property type="entry name" value="ARD"/>
</dbReference>
<dbReference type="InterPro" id="IPR023956">
    <property type="entry name" value="ARD_bac"/>
</dbReference>
<dbReference type="InterPro" id="IPR014710">
    <property type="entry name" value="RmlC-like_jellyroll"/>
</dbReference>
<dbReference type="InterPro" id="IPR011051">
    <property type="entry name" value="RmlC_Cupin_sf"/>
</dbReference>
<dbReference type="PANTHER" id="PTHR23418">
    <property type="entry name" value="ACIREDUCTONE DIOXYGENASE"/>
    <property type="match status" value="1"/>
</dbReference>
<dbReference type="PANTHER" id="PTHR23418:SF0">
    <property type="entry name" value="ACIREDUCTONE DIOXYGENASE"/>
    <property type="match status" value="1"/>
</dbReference>
<dbReference type="Pfam" id="PF03079">
    <property type="entry name" value="ARD"/>
    <property type="match status" value="1"/>
</dbReference>
<dbReference type="SUPFAM" id="SSF51182">
    <property type="entry name" value="RmlC-like cupins"/>
    <property type="match status" value="1"/>
</dbReference>
<feature type="chain" id="PRO_0000359176" description="Acireductone dioxygenase">
    <location>
        <begin position="1"/>
        <end position="170"/>
    </location>
</feature>
<feature type="binding site" evidence="1">
    <location>
        <position position="99"/>
    </location>
    <ligand>
        <name>Fe(2+)</name>
        <dbReference type="ChEBI" id="CHEBI:29033"/>
    </ligand>
</feature>
<feature type="binding site" evidence="1">
    <location>
        <position position="99"/>
    </location>
    <ligand>
        <name>Ni(2+)</name>
        <dbReference type="ChEBI" id="CHEBI:49786"/>
    </ligand>
</feature>
<feature type="binding site" evidence="1">
    <location>
        <position position="101"/>
    </location>
    <ligand>
        <name>Fe(2+)</name>
        <dbReference type="ChEBI" id="CHEBI:29033"/>
    </ligand>
</feature>
<feature type="binding site" evidence="1">
    <location>
        <position position="101"/>
    </location>
    <ligand>
        <name>Ni(2+)</name>
        <dbReference type="ChEBI" id="CHEBI:49786"/>
    </ligand>
</feature>
<feature type="binding site" evidence="1">
    <location>
        <position position="105"/>
    </location>
    <ligand>
        <name>Fe(2+)</name>
        <dbReference type="ChEBI" id="CHEBI:29033"/>
    </ligand>
</feature>
<feature type="binding site" evidence="1">
    <location>
        <position position="105"/>
    </location>
    <ligand>
        <name>Ni(2+)</name>
        <dbReference type="ChEBI" id="CHEBI:49786"/>
    </ligand>
</feature>
<feature type="binding site" evidence="1">
    <location>
        <position position="144"/>
    </location>
    <ligand>
        <name>Fe(2+)</name>
        <dbReference type="ChEBI" id="CHEBI:29033"/>
    </ligand>
</feature>
<feature type="binding site" evidence="1">
    <location>
        <position position="144"/>
    </location>
    <ligand>
        <name>Ni(2+)</name>
        <dbReference type="ChEBI" id="CHEBI:49786"/>
    </ligand>
</feature>
<feature type="site" description="May play a role in metal incorporation in vivo" evidence="1">
    <location>
        <position position="98"/>
    </location>
</feature>
<feature type="site" description="May play a role in transmitting local conformational changes" evidence="1">
    <location>
        <position position="104"/>
    </location>
</feature>
<feature type="site" description="Important to generate the dianion" evidence="1">
    <location>
        <position position="107"/>
    </location>
</feature>
<accession>A7GS63</accession>
<sequence>MAQIRIHEINTRIENEKEVQLFLQKEDVLYEKWDISKLPAHLQNNYALTDENKEEILTLFSNEIADVSQRRGYKAHDIISLSSATPNLDELLINFKQEHHHTDDEVRFIVSGHGIFAIQGKDGRFFDVELEPGDLISVPENVRHYFTLQDDRQVVAIRIFVTTAGWVPIY</sequence>
<protein>
    <recommendedName>
        <fullName evidence="1">Acireductone dioxygenase</fullName>
    </recommendedName>
    <alternativeName>
        <fullName evidence="1">1,2-dihydroxy-3-keto-5-methylthiopentene dioxygenase</fullName>
        <shortName evidence="1">DHK-MTPene dioxygenase</shortName>
    </alternativeName>
    <alternativeName>
        <fullName evidence="1">Acireductone dioxygenase (Fe(2+)-requiring)</fullName>
        <shortName evidence="1">ARD'</shortName>
        <shortName evidence="1">Fe-ARD</shortName>
        <ecNumber evidence="1">1.13.11.54</ecNumber>
    </alternativeName>
    <alternativeName>
        <fullName evidence="1">Acireductone dioxygenase (Ni(2+)-requiring)</fullName>
        <shortName evidence="1">ARD</shortName>
        <shortName evidence="1">Ni-ARD</shortName>
        <ecNumber evidence="1">1.13.11.53</ecNumber>
    </alternativeName>
</protein>
<keyword id="KW-0028">Amino-acid biosynthesis</keyword>
<keyword id="KW-0223">Dioxygenase</keyword>
<keyword id="KW-0408">Iron</keyword>
<keyword id="KW-0479">Metal-binding</keyword>
<keyword id="KW-0486">Methionine biosynthesis</keyword>
<keyword id="KW-0533">Nickel</keyword>
<keyword id="KW-0560">Oxidoreductase</keyword>
<name>MTND_BACCN</name>